<accession>B3GZD6</accession>
<keyword id="KW-0227">DNA damage</keyword>
<keyword id="KW-0234">DNA repair</keyword>
<keyword id="KW-0238">DNA-binding</keyword>
<keyword id="KW-0326">Glycosidase</keyword>
<keyword id="KW-0378">Hydrolase</keyword>
<keyword id="KW-0456">Lyase</keyword>
<keyword id="KW-0479">Metal-binding</keyword>
<keyword id="KW-0511">Multifunctional enzyme</keyword>
<keyword id="KW-0862">Zinc</keyword>
<keyword id="KW-0863">Zinc-finger</keyword>
<feature type="initiator methionine" description="Removed" evidence="1">
    <location>
        <position position="1"/>
    </location>
</feature>
<feature type="chain" id="PRO_1000094027" description="Formamidopyrimidine-DNA glycosylase">
    <location>
        <begin position="2"/>
        <end position="273"/>
    </location>
</feature>
<feature type="zinc finger region" description="FPG-type" evidence="2">
    <location>
        <begin position="236"/>
        <end position="270"/>
    </location>
</feature>
<feature type="active site" description="Schiff-base intermediate with DNA" evidence="2">
    <location>
        <position position="2"/>
    </location>
</feature>
<feature type="active site" description="Proton donor" evidence="2">
    <location>
        <position position="3"/>
    </location>
</feature>
<feature type="active site" description="Proton donor; for beta-elimination activity" evidence="2">
    <location>
        <position position="57"/>
    </location>
</feature>
<feature type="active site" description="Proton donor; for delta-elimination activity" evidence="2">
    <location>
        <position position="260"/>
    </location>
</feature>
<feature type="binding site" evidence="2">
    <location>
        <position position="91"/>
    </location>
    <ligand>
        <name>DNA</name>
        <dbReference type="ChEBI" id="CHEBI:16991"/>
    </ligand>
</feature>
<feature type="binding site" evidence="2">
    <location>
        <position position="110"/>
    </location>
    <ligand>
        <name>DNA</name>
        <dbReference type="ChEBI" id="CHEBI:16991"/>
    </ligand>
</feature>
<feature type="binding site" evidence="2">
    <location>
        <position position="151"/>
    </location>
    <ligand>
        <name>DNA</name>
        <dbReference type="ChEBI" id="CHEBI:16991"/>
    </ligand>
</feature>
<evidence type="ECO:0000250" key="1"/>
<evidence type="ECO:0000255" key="2">
    <source>
        <dbReference type="HAMAP-Rule" id="MF_00103"/>
    </source>
</evidence>
<proteinExistence type="inferred from homology"/>
<organism>
    <name type="scientific">Actinobacillus pleuropneumoniae serotype 7 (strain AP76)</name>
    <dbReference type="NCBI Taxonomy" id="537457"/>
    <lineage>
        <taxon>Bacteria</taxon>
        <taxon>Pseudomonadati</taxon>
        <taxon>Pseudomonadota</taxon>
        <taxon>Gammaproteobacteria</taxon>
        <taxon>Pasteurellales</taxon>
        <taxon>Pasteurellaceae</taxon>
        <taxon>Actinobacillus</taxon>
    </lineage>
</organism>
<dbReference type="EC" id="3.2.2.23" evidence="2"/>
<dbReference type="EC" id="4.2.99.18" evidence="2"/>
<dbReference type="EMBL" id="CP001091">
    <property type="protein sequence ID" value="ACE62729.1"/>
    <property type="molecule type" value="Genomic_DNA"/>
</dbReference>
<dbReference type="RefSeq" id="WP_005618423.1">
    <property type="nucleotide sequence ID" value="NC_010939.1"/>
</dbReference>
<dbReference type="SMR" id="B3GZD6"/>
<dbReference type="KEGG" id="apa:APP7_2077"/>
<dbReference type="HOGENOM" id="CLU_038423_1_1_6"/>
<dbReference type="Proteomes" id="UP000001226">
    <property type="component" value="Chromosome"/>
</dbReference>
<dbReference type="GO" id="GO:0034039">
    <property type="term" value="F:8-oxo-7,8-dihydroguanine DNA N-glycosylase activity"/>
    <property type="evidence" value="ECO:0007669"/>
    <property type="project" value="TreeGrafter"/>
</dbReference>
<dbReference type="GO" id="GO:0140078">
    <property type="term" value="F:class I DNA-(apurinic or apyrimidinic site) endonuclease activity"/>
    <property type="evidence" value="ECO:0007669"/>
    <property type="project" value="UniProtKB-EC"/>
</dbReference>
<dbReference type="GO" id="GO:0003684">
    <property type="term" value="F:damaged DNA binding"/>
    <property type="evidence" value="ECO:0007669"/>
    <property type="project" value="InterPro"/>
</dbReference>
<dbReference type="GO" id="GO:0008270">
    <property type="term" value="F:zinc ion binding"/>
    <property type="evidence" value="ECO:0007669"/>
    <property type="project" value="UniProtKB-UniRule"/>
</dbReference>
<dbReference type="GO" id="GO:0006284">
    <property type="term" value="P:base-excision repair"/>
    <property type="evidence" value="ECO:0007669"/>
    <property type="project" value="InterPro"/>
</dbReference>
<dbReference type="CDD" id="cd08966">
    <property type="entry name" value="EcFpg-like_N"/>
    <property type="match status" value="1"/>
</dbReference>
<dbReference type="FunFam" id="1.10.8.50:FF:000003">
    <property type="entry name" value="Formamidopyrimidine-DNA glycosylase"/>
    <property type="match status" value="1"/>
</dbReference>
<dbReference type="FunFam" id="3.20.190.10:FF:000001">
    <property type="entry name" value="Formamidopyrimidine-DNA glycosylase"/>
    <property type="match status" value="1"/>
</dbReference>
<dbReference type="Gene3D" id="1.10.8.50">
    <property type="match status" value="1"/>
</dbReference>
<dbReference type="Gene3D" id="3.20.190.10">
    <property type="entry name" value="MutM-like, N-terminal"/>
    <property type="match status" value="1"/>
</dbReference>
<dbReference type="HAMAP" id="MF_00103">
    <property type="entry name" value="Fapy_DNA_glycosyl"/>
    <property type="match status" value="1"/>
</dbReference>
<dbReference type="InterPro" id="IPR015886">
    <property type="entry name" value="DNA_glyclase/AP_lyase_DNA-bd"/>
</dbReference>
<dbReference type="InterPro" id="IPR015887">
    <property type="entry name" value="DNA_glyclase_Znf_dom_DNA_BS"/>
</dbReference>
<dbReference type="InterPro" id="IPR020629">
    <property type="entry name" value="Formamido-pyr_DNA_Glyclase"/>
</dbReference>
<dbReference type="InterPro" id="IPR012319">
    <property type="entry name" value="FPG_cat"/>
</dbReference>
<dbReference type="InterPro" id="IPR035937">
    <property type="entry name" value="MutM-like_N-ter"/>
</dbReference>
<dbReference type="InterPro" id="IPR010979">
    <property type="entry name" value="Ribosomal_uS13-like_H2TH"/>
</dbReference>
<dbReference type="InterPro" id="IPR000214">
    <property type="entry name" value="Znf_DNA_glyclase/AP_lyase"/>
</dbReference>
<dbReference type="InterPro" id="IPR010663">
    <property type="entry name" value="Znf_FPG/IleRS"/>
</dbReference>
<dbReference type="NCBIfam" id="TIGR00577">
    <property type="entry name" value="fpg"/>
    <property type="match status" value="1"/>
</dbReference>
<dbReference type="NCBIfam" id="NF002211">
    <property type="entry name" value="PRK01103.1"/>
    <property type="match status" value="1"/>
</dbReference>
<dbReference type="PANTHER" id="PTHR22993">
    <property type="entry name" value="FORMAMIDOPYRIMIDINE-DNA GLYCOSYLASE"/>
    <property type="match status" value="1"/>
</dbReference>
<dbReference type="PANTHER" id="PTHR22993:SF9">
    <property type="entry name" value="FORMAMIDOPYRIMIDINE-DNA GLYCOSYLASE"/>
    <property type="match status" value="1"/>
</dbReference>
<dbReference type="Pfam" id="PF01149">
    <property type="entry name" value="Fapy_DNA_glyco"/>
    <property type="match status" value="1"/>
</dbReference>
<dbReference type="Pfam" id="PF06831">
    <property type="entry name" value="H2TH"/>
    <property type="match status" value="1"/>
</dbReference>
<dbReference type="Pfam" id="PF06827">
    <property type="entry name" value="zf-FPG_IleRS"/>
    <property type="match status" value="1"/>
</dbReference>
<dbReference type="SMART" id="SM00898">
    <property type="entry name" value="Fapy_DNA_glyco"/>
    <property type="match status" value="1"/>
</dbReference>
<dbReference type="SMART" id="SM01232">
    <property type="entry name" value="H2TH"/>
    <property type="match status" value="1"/>
</dbReference>
<dbReference type="SUPFAM" id="SSF57716">
    <property type="entry name" value="Glucocorticoid receptor-like (DNA-binding domain)"/>
    <property type="match status" value="1"/>
</dbReference>
<dbReference type="SUPFAM" id="SSF81624">
    <property type="entry name" value="N-terminal domain of MutM-like DNA repair proteins"/>
    <property type="match status" value="1"/>
</dbReference>
<dbReference type="SUPFAM" id="SSF46946">
    <property type="entry name" value="S13-like H2TH domain"/>
    <property type="match status" value="1"/>
</dbReference>
<dbReference type="PROSITE" id="PS51068">
    <property type="entry name" value="FPG_CAT"/>
    <property type="match status" value="1"/>
</dbReference>
<dbReference type="PROSITE" id="PS01242">
    <property type="entry name" value="ZF_FPG_1"/>
    <property type="match status" value="1"/>
</dbReference>
<dbReference type="PROSITE" id="PS51066">
    <property type="entry name" value="ZF_FPG_2"/>
    <property type="match status" value="1"/>
</dbReference>
<protein>
    <recommendedName>
        <fullName evidence="2">Formamidopyrimidine-DNA glycosylase</fullName>
        <shortName evidence="2">Fapy-DNA glycosylase</shortName>
        <ecNumber evidence="2">3.2.2.23</ecNumber>
    </recommendedName>
    <alternativeName>
        <fullName evidence="2">DNA-(apurinic or apyrimidinic site) lyase MutM</fullName>
        <shortName evidence="2">AP lyase MutM</shortName>
        <ecNumber evidence="2">4.2.99.18</ecNumber>
    </alternativeName>
</protein>
<comment type="function">
    <text evidence="2">Involved in base excision repair of DNA damaged by oxidation or by mutagenic agents. Acts as a DNA glycosylase that recognizes and removes damaged bases. Has a preference for oxidized purines, such as 7,8-dihydro-8-oxoguanine (8-oxoG). Has AP (apurinic/apyrimidinic) lyase activity and introduces nicks in the DNA strand. Cleaves the DNA backbone by beta-delta elimination to generate a single-strand break at the site of the removed base with both 3'- and 5'-phosphates.</text>
</comment>
<comment type="catalytic activity">
    <reaction evidence="2">
        <text>Hydrolysis of DNA containing ring-opened 7-methylguanine residues, releasing 2,6-diamino-4-hydroxy-5-(N-methyl)formamidopyrimidine.</text>
        <dbReference type="EC" id="3.2.2.23"/>
    </reaction>
</comment>
<comment type="catalytic activity">
    <reaction evidence="2">
        <text>2'-deoxyribonucleotide-(2'-deoxyribose 5'-phosphate)-2'-deoxyribonucleotide-DNA = a 3'-end 2'-deoxyribonucleotide-(2,3-dehydro-2,3-deoxyribose 5'-phosphate)-DNA + a 5'-end 5'-phospho-2'-deoxyribonucleoside-DNA + H(+)</text>
        <dbReference type="Rhea" id="RHEA:66592"/>
        <dbReference type="Rhea" id="RHEA-COMP:13180"/>
        <dbReference type="Rhea" id="RHEA-COMP:16897"/>
        <dbReference type="Rhea" id="RHEA-COMP:17067"/>
        <dbReference type="ChEBI" id="CHEBI:15378"/>
        <dbReference type="ChEBI" id="CHEBI:136412"/>
        <dbReference type="ChEBI" id="CHEBI:157695"/>
        <dbReference type="ChEBI" id="CHEBI:167181"/>
        <dbReference type="EC" id="4.2.99.18"/>
    </reaction>
</comment>
<comment type="cofactor">
    <cofactor evidence="2">
        <name>Zn(2+)</name>
        <dbReference type="ChEBI" id="CHEBI:29105"/>
    </cofactor>
    <text evidence="2">Binds 1 zinc ion per subunit.</text>
</comment>
<comment type="subunit">
    <text evidence="2">Monomer.</text>
</comment>
<comment type="similarity">
    <text evidence="2">Belongs to the FPG family.</text>
</comment>
<gene>
    <name evidence="2" type="primary">mutM</name>
    <name evidence="2" type="synonym">fpg</name>
    <name type="ordered locus">APP7_2077</name>
</gene>
<sequence>MPELPEVETSLRGVEPYLHGKIIKQIVVRTQKLRWAVSDELQHMQGAKIVALSRRAKYLILHTTQGDILIHLGMSGSLGILQENQQPAGKHDHVDLITQDGMVLRYNDPRKFGCWLWTKNAEQHELITRLGPEPLSESFTAAYLFARSRNKTVAVKNFIMNNDIVVGVGNIYACESLFMAGLHPELAAQNLTEKQCERLVKVIKEVLAKAIIQGGTTLKDFIQPDGKPGYFAQVLQVYGRKGEACNDCGTIIEAKVIGQRNSYFCPHCQILPR</sequence>
<reference key="1">
    <citation type="submission" date="2008-06" db="EMBL/GenBank/DDBJ databases">
        <title>Genome and proteome analysis of A. pleuropneumoniae serotype 7.</title>
        <authorList>
            <person name="Linke B."/>
            <person name="Buettner F."/>
            <person name="Martinez-Arias R."/>
            <person name="Goesmann A."/>
            <person name="Baltes N."/>
            <person name="Tegetmeyer H."/>
            <person name="Singh M."/>
            <person name="Gerlach G.F."/>
        </authorList>
    </citation>
    <scope>NUCLEOTIDE SEQUENCE [LARGE SCALE GENOMIC DNA]</scope>
    <source>
        <strain>AP76</strain>
    </source>
</reference>
<name>FPG_ACTP7</name>